<comment type="function">
    <text evidence="1">Involved in transcription antitermination. Required for transcription of ribosomal RNA (rRNA) genes. Binds specifically to the boxA antiterminator sequence of the ribosomal RNA (rrn) operons.</text>
</comment>
<comment type="similarity">
    <text evidence="1">Belongs to the NusB family.</text>
</comment>
<reference key="1">
    <citation type="journal article" date="2006" name="J. Bacteriol.">
        <title>Complete genome sequence of the dehalorespiring bacterium Desulfitobacterium hafniense Y51 and comparison with Dehalococcoides ethenogenes 195.</title>
        <authorList>
            <person name="Nonaka H."/>
            <person name="Keresztes G."/>
            <person name="Shinoda Y."/>
            <person name="Ikenaga Y."/>
            <person name="Abe M."/>
            <person name="Naito K."/>
            <person name="Inatomi K."/>
            <person name="Furukawa K."/>
            <person name="Inui M."/>
            <person name="Yukawa H."/>
        </authorList>
    </citation>
    <scope>NUCLEOTIDE SEQUENCE [LARGE SCALE GENOMIC DNA]</scope>
    <source>
        <strain>Y51</strain>
    </source>
</reference>
<proteinExistence type="inferred from homology"/>
<keyword id="KW-1185">Reference proteome</keyword>
<keyword id="KW-0694">RNA-binding</keyword>
<keyword id="KW-0804">Transcription</keyword>
<keyword id="KW-0889">Transcription antitermination</keyword>
<keyword id="KW-0805">Transcription regulation</keyword>
<gene>
    <name evidence="1" type="primary">nusB</name>
    <name type="ordered locus">DSY2364</name>
</gene>
<name>NUSB_DESHY</name>
<feature type="chain" id="PRO_0000265515" description="Transcription antitermination protein NusB">
    <location>
        <begin position="1"/>
        <end position="148"/>
    </location>
</feature>
<organism>
    <name type="scientific">Desulfitobacterium hafniense (strain Y51)</name>
    <dbReference type="NCBI Taxonomy" id="138119"/>
    <lineage>
        <taxon>Bacteria</taxon>
        <taxon>Bacillati</taxon>
        <taxon>Bacillota</taxon>
        <taxon>Clostridia</taxon>
        <taxon>Eubacteriales</taxon>
        <taxon>Desulfitobacteriaceae</taxon>
        <taxon>Desulfitobacterium</taxon>
    </lineage>
</organism>
<sequence length="148" mass="16722">MSRRLARETALQVLFQLEMTGESQDLKSAIHKWADEFAVPEGSIPFAEELAEGTLTHKEVIDENLEKLSEGWSLARMANVDRNLLRLASYEILFRKDIPGRVTINEAIEIAKRYGSEESGKFINGILDKVVESVNKKDEKGNDTLSRD</sequence>
<evidence type="ECO:0000255" key="1">
    <source>
        <dbReference type="HAMAP-Rule" id="MF_00073"/>
    </source>
</evidence>
<dbReference type="EMBL" id="AP008230">
    <property type="protein sequence ID" value="BAE84153.1"/>
    <property type="molecule type" value="Genomic_DNA"/>
</dbReference>
<dbReference type="RefSeq" id="WP_011460271.1">
    <property type="nucleotide sequence ID" value="NC_007907.1"/>
</dbReference>
<dbReference type="SMR" id="Q24UY9"/>
<dbReference type="STRING" id="138119.DSY2364"/>
<dbReference type="KEGG" id="dsy:DSY2364"/>
<dbReference type="eggNOG" id="COG0781">
    <property type="taxonomic scope" value="Bacteria"/>
</dbReference>
<dbReference type="HOGENOM" id="CLU_087843_3_3_9"/>
<dbReference type="Proteomes" id="UP000001946">
    <property type="component" value="Chromosome"/>
</dbReference>
<dbReference type="GO" id="GO:0005829">
    <property type="term" value="C:cytosol"/>
    <property type="evidence" value="ECO:0007669"/>
    <property type="project" value="TreeGrafter"/>
</dbReference>
<dbReference type="GO" id="GO:0003723">
    <property type="term" value="F:RNA binding"/>
    <property type="evidence" value="ECO:0007669"/>
    <property type="project" value="UniProtKB-UniRule"/>
</dbReference>
<dbReference type="GO" id="GO:0006353">
    <property type="term" value="P:DNA-templated transcription termination"/>
    <property type="evidence" value="ECO:0007669"/>
    <property type="project" value="UniProtKB-UniRule"/>
</dbReference>
<dbReference type="GO" id="GO:0031564">
    <property type="term" value="P:transcription antitermination"/>
    <property type="evidence" value="ECO:0007669"/>
    <property type="project" value="UniProtKB-KW"/>
</dbReference>
<dbReference type="CDD" id="cd00619">
    <property type="entry name" value="Terminator_NusB"/>
    <property type="match status" value="1"/>
</dbReference>
<dbReference type="Gene3D" id="1.10.940.10">
    <property type="entry name" value="NusB-like"/>
    <property type="match status" value="1"/>
</dbReference>
<dbReference type="HAMAP" id="MF_00073">
    <property type="entry name" value="NusB"/>
    <property type="match status" value="1"/>
</dbReference>
<dbReference type="InterPro" id="IPR035926">
    <property type="entry name" value="NusB-like_sf"/>
</dbReference>
<dbReference type="InterPro" id="IPR011605">
    <property type="entry name" value="NusB_fam"/>
</dbReference>
<dbReference type="InterPro" id="IPR006027">
    <property type="entry name" value="NusB_RsmB_TIM44"/>
</dbReference>
<dbReference type="NCBIfam" id="TIGR01951">
    <property type="entry name" value="nusB"/>
    <property type="match status" value="1"/>
</dbReference>
<dbReference type="PANTHER" id="PTHR11078:SF3">
    <property type="entry name" value="ANTITERMINATION NUSB DOMAIN-CONTAINING PROTEIN"/>
    <property type="match status" value="1"/>
</dbReference>
<dbReference type="PANTHER" id="PTHR11078">
    <property type="entry name" value="N UTILIZATION SUBSTANCE PROTEIN B-RELATED"/>
    <property type="match status" value="1"/>
</dbReference>
<dbReference type="Pfam" id="PF01029">
    <property type="entry name" value="NusB"/>
    <property type="match status" value="1"/>
</dbReference>
<dbReference type="SUPFAM" id="SSF48013">
    <property type="entry name" value="NusB-like"/>
    <property type="match status" value="1"/>
</dbReference>
<accession>Q24UY9</accession>
<protein>
    <recommendedName>
        <fullName evidence="1">Transcription antitermination protein NusB</fullName>
    </recommendedName>
    <alternativeName>
        <fullName evidence="1">Antitermination factor NusB</fullName>
    </alternativeName>
</protein>